<keyword id="KW-1185">Reference proteome</keyword>
<sequence length="113" mass="12949">MEVNLLSISIKPPIKIPKNKTVELDVDWNIEYKKLDAKKFNFVCNIKAYGDFSFEANIEGEISTENDYDNIPDFISVSIVENLMKSLPKLVSYAQQFRIEENVFVNQPLSLAS</sequence>
<proteinExistence type="predicted"/>
<feature type="chain" id="PRO_0000106682" description="Uncharacterized protein MJ0076">
    <location>
        <begin position="1"/>
        <end position="113"/>
    </location>
</feature>
<protein>
    <recommendedName>
        <fullName>Uncharacterized protein MJ0076</fullName>
    </recommendedName>
</protein>
<reference key="1">
    <citation type="journal article" date="1996" name="Science">
        <title>Complete genome sequence of the methanogenic archaeon, Methanococcus jannaschii.</title>
        <authorList>
            <person name="Bult C.J."/>
            <person name="White O."/>
            <person name="Olsen G.J."/>
            <person name="Zhou L."/>
            <person name="Fleischmann R.D."/>
            <person name="Sutton G.G."/>
            <person name="Blake J.A."/>
            <person name="FitzGerald L.M."/>
            <person name="Clayton R.A."/>
            <person name="Gocayne J.D."/>
            <person name="Kerlavage A.R."/>
            <person name="Dougherty B.A."/>
            <person name="Tomb J.-F."/>
            <person name="Adams M.D."/>
            <person name="Reich C.I."/>
            <person name="Overbeek R."/>
            <person name="Kirkness E.F."/>
            <person name="Weinstock K.G."/>
            <person name="Merrick J.M."/>
            <person name="Glodek A."/>
            <person name="Scott J.L."/>
            <person name="Geoghagen N.S.M."/>
            <person name="Weidman J.F."/>
            <person name="Fuhrmann J.L."/>
            <person name="Nguyen D."/>
            <person name="Utterback T.R."/>
            <person name="Kelley J.M."/>
            <person name="Peterson J.D."/>
            <person name="Sadow P.W."/>
            <person name="Hanna M.C."/>
            <person name="Cotton M.D."/>
            <person name="Roberts K.M."/>
            <person name="Hurst M.A."/>
            <person name="Kaine B.P."/>
            <person name="Borodovsky M."/>
            <person name="Klenk H.-P."/>
            <person name="Fraser C.M."/>
            <person name="Smith H.O."/>
            <person name="Woese C.R."/>
            <person name="Venter J.C."/>
        </authorList>
    </citation>
    <scope>NUCLEOTIDE SEQUENCE [LARGE SCALE GENOMIC DNA]</scope>
    <source>
        <strain>ATCC 43067 / DSM 2661 / JAL-1 / JCM 10045 / NBRC 100440</strain>
    </source>
</reference>
<dbReference type="EMBL" id="L77117">
    <property type="protein sequence ID" value="AAB98057.1"/>
    <property type="molecule type" value="Genomic_DNA"/>
</dbReference>
<dbReference type="PIR" id="E64309">
    <property type="entry name" value="E64309"/>
</dbReference>
<dbReference type="RefSeq" id="WP_010869569.1">
    <property type="nucleotide sequence ID" value="NC_000909.1"/>
</dbReference>
<dbReference type="FunCoup" id="Q60383">
    <property type="interactions" value="2"/>
</dbReference>
<dbReference type="STRING" id="243232.MJ_0076"/>
<dbReference type="PaxDb" id="243232-MJ_0076"/>
<dbReference type="EnsemblBacteria" id="AAB98057">
    <property type="protein sequence ID" value="AAB98057"/>
    <property type="gene ID" value="MJ_0076"/>
</dbReference>
<dbReference type="GeneID" id="1450916"/>
<dbReference type="KEGG" id="mja:MJ_0076"/>
<dbReference type="eggNOG" id="arCOG08279">
    <property type="taxonomic scope" value="Archaea"/>
</dbReference>
<dbReference type="HOGENOM" id="CLU_2079438_0_0_2"/>
<dbReference type="InParanoid" id="Q60383"/>
<dbReference type="OrthoDB" id="76644at2157"/>
<dbReference type="Proteomes" id="UP000000805">
    <property type="component" value="Chromosome"/>
</dbReference>
<name>Y076_METJA</name>
<gene>
    <name type="ordered locus">MJ0076</name>
</gene>
<accession>Q60383</accession>
<organism>
    <name type="scientific">Methanocaldococcus jannaschii (strain ATCC 43067 / DSM 2661 / JAL-1 / JCM 10045 / NBRC 100440)</name>
    <name type="common">Methanococcus jannaschii</name>
    <dbReference type="NCBI Taxonomy" id="243232"/>
    <lineage>
        <taxon>Archaea</taxon>
        <taxon>Methanobacteriati</taxon>
        <taxon>Methanobacteriota</taxon>
        <taxon>Methanomada group</taxon>
        <taxon>Methanococci</taxon>
        <taxon>Methanococcales</taxon>
        <taxon>Methanocaldococcaceae</taxon>
        <taxon>Methanocaldococcus</taxon>
    </lineage>
</organism>